<name>RECA_PETMO</name>
<sequence length="368" mass="40386">MAKNDSKDANKEELLEKLVKELEKNHGTGSVMLMGKGLDNSNLAVVPSGCLSLDIALGVGGYPRGRIIEIYGNESSGKTTLALHSLAEVQKLNGIVAFVDAEHALDVEYARKLGVDVDKLIVSQPDYGEQALEIVDSLVRSNIVDLIVVDSVAALVPKAEIEGAMGDSHMGLQARLMSQALRKLAGSINKSKSIVIFINQVRMKIGVVYGNPETTTGGIALKFYATIRVEVRKGNPIREGKDQIGNETTLKVVKNKVAPPFKQANVDMIFGRGIPKENDIFNIAVEEELIQRKGAWFSFINENGEEISLGQGKTNSVSYLMENPDILDYLEYTIRKKHNLIIPDYLIEKFESNSSKGKKVKSEELQEN</sequence>
<evidence type="ECO:0000255" key="1">
    <source>
        <dbReference type="HAMAP-Rule" id="MF_00268"/>
    </source>
</evidence>
<reference key="1">
    <citation type="submission" date="2007-11" db="EMBL/GenBank/DDBJ databases">
        <title>Complete sequence of Petroga mobilis SJ95.</title>
        <authorList>
            <consortium name="US DOE Joint Genome Institute"/>
            <person name="Copeland A."/>
            <person name="Lucas S."/>
            <person name="Lapidus A."/>
            <person name="Barry K."/>
            <person name="Glavina del Rio T."/>
            <person name="Dalin E."/>
            <person name="Tice H."/>
            <person name="Pitluck S."/>
            <person name="Meincke L."/>
            <person name="Brettin T."/>
            <person name="Bruce D."/>
            <person name="Detter J.C."/>
            <person name="Han C."/>
            <person name="Kuske C.R."/>
            <person name="Schmutz J."/>
            <person name="Larimer F."/>
            <person name="Land M."/>
            <person name="Hauser L."/>
            <person name="Kyrpides N."/>
            <person name="Mikhailova N."/>
            <person name="Noll K."/>
            <person name="Richardson P."/>
        </authorList>
    </citation>
    <scope>NUCLEOTIDE SEQUENCE [LARGE SCALE GENOMIC DNA]</scope>
    <source>
        <strain>DSM 10674 / SJ95</strain>
    </source>
</reference>
<dbReference type="EMBL" id="CP000879">
    <property type="protein sequence ID" value="ABX30830.1"/>
    <property type="molecule type" value="Genomic_DNA"/>
</dbReference>
<dbReference type="RefSeq" id="WP_012207937.1">
    <property type="nucleotide sequence ID" value="NC_010003.1"/>
</dbReference>
<dbReference type="SMR" id="A9BEV2"/>
<dbReference type="STRING" id="403833.Pmob_0081"/>
<dbReference type="KEGG" id="pmo:Pmob_0081"/>
<dbReference type="eggNOG" id="COG0468">
    <property type="taxonomic scope" value="Bacteria"/>
</dbReference>
<dbReference type="HOGENOM" id="CLU_040469_3_2_0"/>
<dbReference type="OrthoDB" id="9776733at2"/>
<dbReference type="Proteomes" id="UP000000789">
    <property type="component" value="Chromosome"/>
</dbReference>
<dbReference type="GO" id="GO:0005829">
    <property type="term" value="C:cytosol"/>
    <property type="evidence" value="ECO:0007669"/>
    <property type="project" value="TreeGrafter"/>
</dbReference>
<dbReference type="GO" id="GO:0005524">
    <property type="term" value="F:ATP binding"/>
    <property type="evidence" value="ECO:0007669"/>
    <property type="project" value="UniProtKB-UniRule"/>
</dbReference>
<dbReference type="GO" id="GO:0016887">
    <property type="term" value="F:ATP hydrolysis activity"/>
    <property type="evidence" value="ECO:0007669"/>
    <property type="project" value="InterPro"/>
</dbReference>
<dbReference type="GO" id="GO:0140664">
    <property type="term" value="F:ATP-dependent DNA damage sensor activity"/>
    <property type="evidence" value="ECO:0007669"/>
    <property type="project" value="InterPro"/>
</dbReference>
<dbReference type="GO" id="GO:0003684">
    <property type="term" value="F:damaged DNA binding"/>
    <property type="evidence" value="ECO:0007669"/>
    <property type="project" value="UniProtKB-UniRule"/>
</dbReference>
<dbReference type="GO" id="GO:0003697">
    <property type="term" value="F:single-stranded DNA binding"/>
    <property type="evidence" value="ECO:0007669"/>
    <property type="project" value="UniProtKB-UniRule"/>
</dbReference>
<dbReference type="GO" id="GO:0006310">
    <property type="term" value="P:DNA recombination"/>
    <property type="evidence" value="ECO:0007669"/>
    <property type="project" value="UniProtKB-UniRule"/>
</dbReference>
<dbReference type="GO" id="GO:0006281">
    <property type="term" value="P:DNA repair"/>
    <property type="evidence" value="ECO:0007669"/>
    <property type="project" value="UniProtKB-UniRule"/>
</dbReference>
<dbReference type="GO" id="GO:0009432">
    <property type="term" value="P:SOS response"/>
    <property type="evidence" value="ECO:0007669"/>
    <property type="project" value="UniProtKB-UniRule"/>
</dbReference>
<dbReference type="CDD" id="cd00983">
    <property type="entry name" value="RecA"/>
    <property type="match status" value="1"/>
</dbReference>
<dbReference type="FunFam" id="3.40.50.300:FF:000087">
    <property type="entry name" value="Recombinase RecA"/>
    <property type="match status" value="1"/>
</dbReference>
<dbReference type="Gene3D" id="3.40.50.300">
    <property type="entry name" value="P-loop containing nucleotide triphosphate hydrolases"/>
    <property type="match status" value="1"/>
</dbReference>
<dbReference type="HAMAP" id="MF_00268">
    <property type="entry name" value="RecA"/>
    <property type="match status" value="1"/>
</dbReference>
<dbReference type="InterPro" id="IPR003593">
    <property type="entry name" value="AAA+_ATPase"/>
</dbReference>
<dbReference type="InterPro" id="IPR013765">
    <property type="entry name" value="DNA_recomb/repair_RecA"/>
</dbReference>
<dbReference type="InterPro" id="IPR020584">
    <property type="entry name" value="DNA_recomb/repair_RecA_CS"/>
</dbReference>
<dbReference type="InterPro" id="IPR027417">
    <property type="entry name" value="P-loop_NTPase"/>
</dbReference>
<dbReference type="InterPro" id="IPR049261">
    <property type="entry name" value="RecA-like_C"/>
</dbReference>
<dbReference type="InterPro" id="IPR049428">
    <property type="entry name" value="RecA-like_N"/>
</dbReference>
<dbReference type="InterPro" id="IPR020588">
    <property type="entry name" value="RecA_ATP-bd"/>
</dbReference>
<dbReference type="InterPro" id="IPR023400">
    <property type="entry name" value="RecA_C_sf"/>
</dbReference>
<dbReference type="InterPro" id="IPR020587">
    <property type="entry name" value="RecA_monomer-monomer_interface"/>
</dbReference>
<dbReference type="NCBIfam" id="TIGR02012">
    <property type="entry name" value="tigrfam_recA"/>
    <property type="match status" value="1"/>
</dbReference>
<dbReference type="PANTHER" id="PTHR45900:SF1">
    <property type="entry name" value="MITOCHONDRIAL DNA REPAIR PROTEIN RECA HOMOLOG-RELATED"/>
    <property type="match status" value="1"/>
</dbReference>
<dbReference type="PANTHER" id="PTHR45900">
    <property type="entry name" value="RECA"/>
    <property type="match status" value="1"/>
</dbReference>
<dbReference type="Pfam" id="PF00154">
    <property type="entry name" value="RecA"/>
    <property type="match status" value="1"/>
</dbReference>
<dbReference type="Pfam" id="PF21096">
    <property type="entry name" value="RecA_C"/>
    <property type="match status" value="1"/>
</dbReference>
<dbReference type="PRINTS" id="PR00142">
    <property type="entry name" value="RECA"/>
</dbReference>
<dbReference type="SMART" id="SM00382">
    <property type="entry name" value="AAA"/>
    <property type="match status" value="1"/>
</dbReference>
<dbReference type="SUPFAM" id="SSF52540">
    <property type="entry name" value="P-loop containing nucleoside triphosphate hydrolases"/>
    <property type="match status" value="1"/>
</dbReference>
<dbReference type="SUPFAM" id="SSF54752">
    <property type="entry name" value="RecA protein, C-terminal domain"/>
    <property type="match status" value="1"/>
</dbReference>
<dbReference type="PROSITE" id="PS00321">
    <property type="entry name" value="RECA_1"/>
    <property type="match status" value="1"/>
</dbReference>
<dbReference type="PROSITE" id="PS50162">
    <property type="entry name" value="RECA_2"/>
    <property type="match status" value="1"/>
</dbReference>
<dbReference type="PROSITE" id="PS50163">
    <property type="entry name" value="RECA_3"/>
    <property type="match status" value="1"/>
</dbReference>
<comment type="function">
    <text evidence="1">Can catalyze the hydrolysis of ATP in the presence of single-stranded DNA, the ATP-dependent uptake of single-stranded DNA by duplex DNA, and the ATP-dependent hybridization of homologous single-stranded DNAs. It interacts with LexA causing its activation and leading to its autocatalytic cleavage.</text>
</comment>
<comment type="subcellular location">
    <subcellularLocation>
        <location evidence="1">Cytoplasm</location>
    </subcellularLocation>
</comment>
<comment type="similarity">
    <text evidence="1">Belongs to the RecA family.</text>
</comment>
<organism>
    <name type="scientific">Petrotoga mobilis (strain DSM 10674 / SJ95)</name>
    <dbReference type="NCBI Taxonomy" id="403833"/>
    <lineage>
        <taxon>Bacteria</taxon>
        <taxon>Thermotogati</taxon>
        <taxon>Thermotogota</taxon>
        <taxon>Thermotogae</taxon>
        <taxon>Petrotogales</taxon>
        <taxon>Petrotogaceae</taxon>
        <taxon>Petrotoga</taxon>
    </lineage>
</organism>
<protein>
    <recommendedName>
        <fullName evidence="1">Protein RecA</fullName>
    </recommendedName>
    <alternativeName>
        <fullName evidence="1">Recombinase A</fullName>
    </alternativeName>
</protein>
<keyword id="KW-0067">ATP-binding</keyword>
<keyword id="KW-0963">Cytoplasm</keyword>
<keyword id="KW-0227">DNA damage</keyword>
<keyword id="KW-0233">DNA recombination</keyword>
<keyword id="KW-0234">DNA repair</keyword>
<keyword id="KW-0238">DNA-binding</keyword>
<keyword id="KW-0547">Nucleotide-binding</keyword>
<keyword id="KW-0742">SOS response</keyword>
<proteinExistence type="inferred from homology"/>
<gene>
    <name evidence="1" type="primary">recA</name>
    <name type="ordered locus">Pmob_0081</name>
</gene>
<accession>A9BEV2</accession>
<feature type="chain" id="PRO_1000114352" description="Protein RecA">
    <location>
        <begin position="1"/>
        <end position="368"/>
    </location>
</feature>
<feature type="binding site" evidence="1">
    <location>
        <begin position="72"/>
        <end position="79"/>
    </location>
    <ligand>
        <name>ATP</name>
        <dbReference type="ChEBI" id="CHEBI:30616"/>
    </ligand>
</feature>